<gene>
    <name evidence="1" type="primary">recF</name>
    <name type="ordered locus">SARI_03809</name>
</gene>
<accession>A9MJU2</accession>
<feature type="chain" id="PRO_1000079601" description="DNA replication and repair protein RecF">
    <location>
        <begin position="1"/>
        <end position="357"/>
    </location>
</feature>
<feature type="binding site" evidence="1">
    <location>
        <begin position="30"/>
        <end position="37"/>
    </location>
    <ligand>
        <name>ATP</name>
        <dbReference type="ChEBI" id="CHEBI:30616"/>
    </ligand>
</feature>
<name>RECF_SALAR</name>
<keyword id="KW-0067">ATP-binding</keyword>
<keyword id="KW-0963">Cytoplasm</keyword>
<keyword id="KW-0227">DNA damage</keyword>
<keyword id="KW-0234">DNA repair</keyword>
<keyword id="KW-0235">DNA replication</keyword>
<keyword id="KW-0238">DNA-binding</keyword>
<keyword id="KW-0547">Nucleotide-binding</keyword>
<keyword id="KW-1185">Reference proteome</keyword>
<keyword id="KW-0742">SOS response</keyword>
<protein>
    <recommendedName>
        <fullName evidence="1">DNA replication and repair protein RecF</fullName>
    </recommendedName>
</protein>
<evidence type="ECO:0000255" key="1">
    <source>
        <dbReference type="HAMAP-Rule" id="MF_00365"/>
    </source>
</evidence>
<organism>
    <name type="scientific">Salmonella arizonae (strain ATCC BAA-731 / CDC346-86 / RSK2980)</name>
    <dbReference type="NCBI Taxonomy" id="41514"/>
    <lineage>
        <taxon>Bacteria</taxon>
        <taxon>Pseudomonadati</taxon>
        <taxon>Pseudomonadota</taxon>
        <taxon>Gammaproteobacteria</taxon>
        <taxon>Enterobacterales</taxon>
        <taxon>Enterobacteriaceae</taxon>
        <taxon>Salmonella</taxon>
    </lineage>
</organism>
<proteinExistence type="inferred from homology"/>
<sequence length="357" mass="40439">MSLSRLLIKDFRNIENADLALSPGFNFLVGANGSGKTSVLEAIYTLGHGRAFRSLQIGRVIRHEQEAFVLHGRLQGEERETSIGLTKDKQGDSKVRIDGTDGHKVAELAHLMPMQLITPEGFTLLNGGPKYRRAFLDWGCFHNEAGFFTAWSNLKRLLKQRNAALRQVSRYEQLRPWDKELIPLAEQISTWRAEYSSAIAQDMADTCQQFLPEFSLTFSFQRGWEKETDYADVLERSFERDRILTYTAHGPHKADFRIRADGAPVEDTLSRGQLKLLMCALRLAQGEFLTRESGRRCLYLIDDFASELDDARRGLLASRLKATQSQVFVSAISAEHVLDMSDKNSKMFSVEKGKITD</sequence>
<dbReference type="EMBL" id="CP000880">
    <property type="protein sequence ID" value="ABX23603.1"/>
    <property type="molecule type" value="Genomic_DNA"/>
</dbReference>
<dbReference type="SMR" id="A9MJU2"/>
<dbReference type="STRING" id="41514.SARI_03809"/>
<dbReference type="KEGG" id="ses:SARI_03809"/>
<dbReference type="HOGENOM" id="CLU_040267_0_0_6"/>
<dbReference type="Proteomes" id="UP000002084">
    <property type="component" value="Chromosome"/>
</dbReference>
<dbReference type="GO" id="GO:0005737">
    <property type="term" value="C:cytoplasm"/>
    <property type="evidence" value="ECO:0007669"/>
    <property type="project" value="UniProtKB-SubCell"/>
</dbReference>
<dbReference type="GO" id="GO:0005524">
    <property type="term" value="F:ATP binding"/>
    <property type="evidence" value="ECO:0007669"/>
    <property type="project" value="UniProtKB-UniRule"/>
</dbReference>
<dbReference type="GO" id="GO:0003697">
    <property type="term" value="F:single-stranded DNA binding"/>
    <property type="evidence" value="ECO:0007669"/>
    <property type="project" value="UniProtKB-UniRule"/>
</dbReference>
<dbReference type="GO" id="GO:0006260">
    <property type="term" value="P:DNA replication"/>
    <property type="evidence" value="ECO:0007669"/>
    <property type="project" value="UniProtKB-UniRule"/>
</dbReference>
<dbReference type="GO" id="GO:0000731">
    <property type="term" value="P:DNA synthesis involved in DNA repair"/>
    <property type="evidence" value="ECO:0007669"/>
    <property type="project" value="TreeGrafter"/>
</dbReference>
<dbReference type="GO" id="GO:0006302">
    <property type="term" value="P:double-strand break repair"/>
    <property type="evidence" value="ECO:0007669"/>
    <property type="project" value="TreeGrafter"/>
</dbReference>
<dbReference type="GO" id="GO:0009432">
    <property type="term" value="P:SOS response"/>
    <property type="evidence" value="ECO:0007669"/>
    <property type="project" value="UniProtKB-UniRule"/>
</dbReference>
<dbReference type="FunFam" id="1.20.1050.90:FF:000001">
    <property type="entry name" value="DNA replication and repair protein RecF"/>
    <property type="match status" value="1"/>
</dbReference>
<dbReference type="Gene3D" id="3.40.50.300">
    <property type="entry name" value="P-loop containing nucleotide triphosphate hydrolases"/>
    <property type="match status" value="1"/>
</dbReference>
<dbReference type="Gene3D" id="1.20.1050.90">
    <property type="entry name" value="RecF/RecN/SMC, N-terminal domain"/>
    <property type="match status" value="1"/>
</dbReference>
<dbReference type="HAMAP" id="MF_00365">
    <property type="entry name" value="RecF"/>
    <property type="match status" value="1"/>
</dbReference>
<dbReference type="InterPro" id="IPR001238">
    <property type="entry name" value="DNA-binding_RecF"/>
</dbReference>
<dbReference type="InterPro" id="IPR018078">
    <property type="entry name" value="DNA-binding_RecF_CS"/>
</dbReference>
<dbReference type="InterPro" id="IPR027417">
    <property type="entry name" value="P-loop_NTPase"/>
</dbReference>
<dbReference type="InterPro" id="IPR003395">
    <property type="entry name" value="RecF/RecN/SMC_N"/>
</dbReference>
<dbReference type="InterPro" id="IPR042174">
    <property type="entry name" value="RecF_2"/>
</dbReference>
<dbReference type="NCBIfam" id="TIGR00611">
    <property type="entry name" value="recf"/>
    <property type="match status" value="1"/>
</dbReference>
<dbReference type="PANTHER" id="PTHR32182">
    <property type="entry name" value="DNA REPLICATION AND REPAIR PROTEIN RECF"/>
    <property type="match status" value="1"/>
</dbReference>
<dbReference type="PANTHER" id="PTHR32182:SF0">
    <property type="entry name" value="DNA REPLICATION AND REPAIR PROTEIN RECF"/>
    <property type="match status" value="1"/>
</dbReference>
<dbReference type="Pfam" id="PF02463">
    <property type="entry name" value="SMC_N"/>
    <property type="match status" value="1"/>
</dbReference>
<dbReference type="SUPFAM" id="SSF52540">
    <property type="entry name" value="P-loop containing nucleoside triphosphate hydrolases"/>
    <property type="match status" value="1"/>
</dbReference>
<dbReference type="PROSITE" id="PS00617">
    <property type="entry name" value="RECF_1"/>
    <property type="match status" value="1"/>
</dbReference>
<dbReference type="PROSITE" id="PS00618">
    <property type="entry name" value="RECF_2"/>
    <property type="match status" value="1"/>
</dbReference>
<comment type="function">
    <text evidence="1">The RecF protein is involved in DNA metabolism; it is required for DNA replication and normal SOS inducibility. RecF binds preferentially to single-stranded, linear DNA. It also seems to bind ATP.</text>
</comment>
<comment type="subcellular location">
    <subcellularLocation>
        <location evidence="1">Cytoplasm</location>
    </subcellularLocation>
</comment>
<comment type="similarity">
    <text evidence="1">Belongs to the RecF family.</text>
</comment>
<reference key="1">
    <citation type="submission" date="2007-11" db="EMBL/GenBank/DDBJ databases">
        <authorList>
            <consortium name="The Salmonella enterica serovar Arizonae Genome Sequencing Project"/>
            <person name="McClelland M."/>
            <person name="Sanderson E.K."/>
            <person name="Porwollik S."/>
            <person name="Spieth J."/>
            <person name="Clifton W.S."/>
            <person name="Fulton R."/>
            <person name="Chunyan W."/>
            <person name="Wollam A."/>
            <person name="Shah N."/>
            <person name="Pepin K."/>
            <person name="Bhonagiri V."/>
            <person name="Nash W."/>
            <person name="Johnson M."/>
            <person name="Thiruvilangam P."/>
            <person name="Wilson R."/>
        </authorList>
    </citation>
    <scope>NUCLEOTIDE SEQUENCE [LARGE SCALE GENOMIC DNA]</scope>
    <source>
        <strain>ATCC BAA-731 / CDC346-86 / RSK2980</strain>
    </source>
</reference>